<name>CHAB_ECOL6</name>
<reference key="1">
    <citation type="journal article" date="2002" name="Proc. Natl. Acad. Sci. U.S.A.">
        <title>Extensive mosaic structure revealed by the complete genome sequence of uropathogenic Escherichia coli.</title>
        <authorList>
            <person name="Welch R.A."/>
            <person name="Burland V."/>
            <person name="Plunkett G. III"/>
            <person name="Redford P."/>
            <person name="Roesch P."/>
            <person name="Rasko D."/>
            <person name="Buckles E.L."/>
            <person name="Liou S.-R."/>
            <person name="Boutin A."/>
            <person name="Hackett J."/>
            <person name="Stroud D."/>
            <person name="Mayhew G.F."/>
            <person name="Rose D.J."/>
            <person name="Zhou S."/>
            <person name="Schwartz D.C."/>
            <person name="Perna N.T."/>
            <person name="Mobley H.L.T."/>
            <person name="Donnenberg M.S."/>
            <person name="Blattner F.R."/>
        </authorList>
    </citation>
    <scope>NUCLEOTIDE SEQUENCE [LARGE SCALE GENOMIC DNA]</scope>
    <source>
        <strain>CFT073 / ATCC 700928 / UPEC</strain>
    </source>
</reference>
<feature type="chain" id="PRO_0000089634" description="Putative cation transport regulator ChaB">
    <location>
        <begin position="1"/>
        <end position="76"/>
    </location>
</feature>
<accession>P0AE64</accession>
<accession>P39162</accession>
<evidence type="ECO:0000250" key="1">
    <source>
        <dbReference type="UniProtKB" id="P0AE65"/>
    </source>
</evidence>
<evidence type="ECO:0000305" key="2"/>
<organism>
    <name type="scientific">Escherichia coli O6:H1 (strain CFT073 / ATCC 700928 / UPEC)</name>
    <dbReference type="NCBI Taxonomy" id="199310"/>
    <lineage>
        <taxon>Bacteria</taxon>
        <taxon>Pseudomonadati</taxon>
        <taxon>Pseudomonadota</taxon>
        <taxon>Gammaproteobacteria</taxon>
        <taxon>Enterobacterales</taxon>
        <taxon>Enterobacteriaceae</taxon>
        <taxon>Escherichia</taxon>
    </lineage>
</organism>
<comment type="function">
    <text evidence="1">Might be a regulator of the sodium-potassium/proton antiporter ChaA.</text>
</comment>
<comment type="subunit">
    <text evidence="1">Monomer.</text>
</comment>
<comment type="similarity">
    <text evidence="2">Belongs to the ChaB family.</text>
</comment>
<dbReference type="EMBL" id="AE014075">
    <property type="protein sequence ID" value="AAN80144.1"/>
    <property type="molecule type" value="Genomic_DNA"/>
</dbReference>
<dbReference type="RefSeq" id="WP_001146444.1">
    <property type="nucleotide sequence ID" value="NZ_CP051263.1"/>
</dbReference>
<dbReference type="BMRB" id="P0AE64"/>
<dbReference type="SMR" id="P0AE64"/>
<dbReference type="STRING" id="199310.c1677"/>
<dbReference type="GeneID" id="93775285"/>
<dbReference type="KEGG" id="ecc:c1677"/>
<dbReference type="eggNOG" id="COG4572">
    <property type="taxonomic scope" value="Bacteria"/>
</dbReference>
<dbReference type="HOGENOM" id="CLU_179907_0_0_6"/>
<dbReference type="BioCyc" id="ECOL199310:C1677-MONOMER"/>
<dbReference type="Proteomes" id="UP000001410">
    <property type="component" value="Chromosome"/>
</dbReference>
<dbReference type="Gene3D" id="1.10.1740.70">
    <property type="entry name" value="ChaB"/>
    <property type="match status" value="1"/>
</dbReference>
<dbReference type="InterPro" id="IPR009317">
    <property type="entry name" value="ChaB"/>
</dbReference>
<dbReference type="InterPro" id="IPR037205">
    <property type="entry name" value="ChaB_sf"/>
</dbReference>
<dbReference type="NCBIfam" id="NF007136">
    <property type="entry name" value="PRK09582.1"/>
    <property type="match status" value="1"/>
</dbReference>
<dbReference type="Pfam" id="PF06150">
    <property type="entry name" value="ChaB"/>
    <property type="match status" value="1"/>
</dbReference>
<dbReference type="SUPFAM" id="SSF140376">
    <property type="entry name" value="ChaB-like"/>
    <property type="match status" value="1"/>
</dbReference>
<sequence>MPYKTKSDLPESVKHVLPSHAQDIYKEAFNSAWDQYKDKEDRRDDASREETAHKVAWAAVKHEYAKGDDDKWHKKS</sequence>
<protein>
    <recommendedName>
        <fullName>Putative cation transport regulator ChaB</fullName>
    </recommendedName>
</protein>
<gene>
    <name type="primary">chaB</name>
    <name type="ordered locus">c1677</name>
</gene>
<proteinExistence type="inferred from homology"/>
<keyword id="KW-1185">Reference proteome</keyword>
<keyword id="KW-0804">Transcription</keyword>
<keyword id="KW-0805">Transcription regulation</keyword>